<evidence type="ECO:0000255" key="1">
    <source>
        <dbReference type="HAMAP-Rule" id="MF_01283"/>
    </source>
</evidence>
<gene>
    <name evidence="1" type="primary">ribBA</name>
    <name type="ordered locus">MUL_1809</name>
</gene>
<feature type="chain" id="PRO_1000067427" description="Riboflavin biosynthesis protein RibBA">
    <location>
        <begin position="1"/>
        <end position="425"/>
    </location>
</feature>
<feature type="region of interest" description="DHBP synthase">
    <location>
        <begin position="1"/>
        <end position="204"/>
    </location>
</feature>
<feature type="region of interest" description="GTP cyclohydrolase II">
    <location>
        <begin position="205"/>
        <end position="425"/>
    </location>
</feature>
<feature type="active site" description="Proton acceptor; for GTP cyclohydrolase activity" evidence="1">
    <location>
        <position position="337"/>
    </location>
</feature>
<feature type="active site" description="Nucleophile; for GTP cyclohydrolase activity" evidence="1">
    <location>
        <position position="339"/>
    </location>
</feature>
<feature type="binding site" evidence="1">
    <location>
        <begin position="28"/>
        <end position="29"/>
    </location>
    <ligand>
        <name>D-ribulose 5-phosphate</name>
        <dbReference type="ChEBI" id="CHEBI:58121"/>
    </ligand>
</feature>
<feature type="binding site" evidence="1">
    <location>
        <position position="29"/>
    </location>
    <ligand>
        <name>Mg(2+)</name>
        <dbReference type="ChEBI" id="CHEBI:18420"/>
        <label>1</label>
    </ligand>
</feature>
<feature type="binding site" evidence="1">
    <location>
        <position position="29"/>
    </location>
    <ligand>
        <name>Mg(2+)</name>
        <dbReference type="ChEBI" id="CHEBI:18420"/>
        <label>2</label>
    </ligand>
</feature>
<feature type="binding site" evidence="1">
    <location>
        <position position="33"/>
    </location>
    <ligand>
        <name>D-ribulose 5-phosphate</name>
        <dbReference type="ChEBI" id="CHEBI:58121"/>
    </ligand>
</feature>
<feature type="binding site" evidence="1">
    <location>
        <begin position="141"/>
        <end position="145"/>
    </location>
    <ligand>
        <name>D-ribulose 5-phosphate</name>
        <dbReference type="ChEBI" id="CHEBI:58121"/>
    </ligand>
</feature>
<feature type="binding site" evidence="1">
    <location>
        <position position="144"/>
    </location>
    <ligand>
        <name>Mg(2+)</name>
        <dbReference type="ChEBI" id="CHEBI:18420"/>
        <label>2</label>
    </ligand>
</feature>
<feature type="binding site" evidence="1">
    <location>
        <position position="165"/>
    </location>
    <ligand>
        <name>D-ribulose 5-phosphate</name>
        <dbReference type="ChEBI" id="CHEBI:58121"/>
    </ligand>
</feature>
<feature type="binding site" evidence="1">
    <location>
        <begin position="259"/>
        <end position="263"/>
    </location>
    <ligand>
        <name>GTP</name>
        <dbReference type="ChEBI" id="CHEBI:37565"/>
    </ligand>
</feature>
<feature type="binding site" evidence="1">
    <location>
        <position position="264"/>
    </location>
    <ligand>
        <name>Zn(2+)</name>
        <dbReference type="ChEBI" id="CHEBI:29105"/>
        <note>catalytic</note>
    </ligand>
</feature>
<feature type="binding site" evidence="1">
    <location>
        <position position="275"/>
    </location>
    <ligand>
        <name>Zn(2+)</name>
        <dbReference type="ChEBI" id="CHEBI:29105"/>
        <note>catalytic</note>
    </ligand>
</feature>
<feature type="binding site" evidence="1">
    <location>
        <position position="277"/>
    </location>
    <ligand>
        <name>Zn(2+)</name>
        <dbReference type="ChEBI" id="CHEBI:29105"/>
        <note>catalytic</note>
    </ligand>
</feature>
<feature type="binding site" evidence="1">
    <location>
        <position position="280"/>
    </location>
    <ligand>
        <name>GTP</name>
        <dbReference type="ChEBI" id="CHEBI:37565"/>
    </ligand>
</feature>
<feature type="binding site" evidence="1">
    <location>
        <begin position="303"/>
        <end position="305"/>
    </location>
    <ligand>
        <name>GTP</name>
        <dbReference type="ChEBI" id="CHEBI:37565"/>
    </ligand>
</feature>
<feature type="binding site" evidence="1">
    <location>
        <position position="325"/>
    </location>
    <ligand>
        <name>GTP</name>
        <dbReference type="ChEBI" id="CHEBI:37565"/>
    </ligand>
</feature>
<feature type="binding site" evidence="1">
    <location>
        <position position="360"/>
    </location>
    <ligand>
        <name>GTP</name>
        <dbReference type="ChEBI" id="CHEBI:37565"/>
    </ligand>
</feature>
<feature type="binding site" evidence="1">
    <location>
        <position position="365"/>
    </location>
    <ligand>
        <name>GTP</name>
        <dbReference type="ChEBI" id="CHEBI:37565"/>
    </ligand>
</feature>
<feature type="site" description="Essential for DHBP synthase activity" evidence="1">
    <location>
        <position position="127"/>
    </location>
</feature>
<feature type="site" description="Essential for DHBP synthase activity" evidence="1">
    <location>
        <position position="165"/>
    </location>
</feature>
<accession>A0PPL6</accession>
<reference key="1">
    <citation type="journal article" date="2007" name="Genome Res.">
        <title>Reductive evolution and niche adaptation inferred from the genome of Mycobacterium ulcerans, the causative agent of Buruli ulcer.</title>
        <authorList>
            <person name="Stinear T.P."/>
            <person name="Seemann T."/>
            <person name="Pidot S."/>
            <person name="Frigui W."/>
            <person name="Reysset G."/>
            <person name="Garnier T."/>
            <person name="Meurice G."/>
            <person name="Simon D."/>
            <person name="Bouchier C."/>
            <person name="Ma L."/>
            <person name="Tichit M."/>
            <person name="Porter J.L."/>
            <person name="Ryan J."/>
            <person name="Johnson P.D.R."/>
            <person name="Davies J.K."/>
            <person name="Jenkin G.A."/>
            <person name="Small P.L.C."/>
            <person name="Jones L.M."/>
            <person name="Tekaia F."/>
            <person name="Laval F."/>
            <person name="Daffe M."/>
            <person name="Parkhill J."/>
            <person name="Cole S.T."/>
        </authorList>
    </citation>
    <scope>NUCLEOTIDE SEQUENCE [LARGE SCALE GENOMIC DNA]</scope>
    <source>
        <strain>Agy99</strain>
    </source>
</reference>
<proteinExistence type="inferred from homology"/>
<keyword id="KW-0342">GTP-binding</keyword>
<keyword id="KW-0378">Hydrolase</keyword>
<keyword id="KW-0456">Lyase</keyword>
<keyword id="KW-0460">Magnesium</keyword>
<keyword id="KW-0464">Manganese</keyword>
<keyword id="KW-0479">Metal-binding</keyword>
<keyword id="KW-0511">Multifunctional enzyme</keyword>
<keyword id="KW-0547">Nucleotide-binding</keyword>
<keyword id="KW-0686">Riboflavin biosynthesis</keyword>
<keyword id="KW-0862">Zinc</keyword>
<organism>
    <name type="scientific">Mycobacterium ulcerans (strain Agy99)</name>
    <dbReference type="NCBI Taxonomy" id="362242"/>
    <lineage>
        <taxon>Bacteria</taxon>
        <taxon>Bacillati</taxon>
        <taxon>Actinomycetota</taxon>
        <taxon>Actinomycetes</taxon>
        <taxon>Mycobacteriales</taxon>
        <taxon>Mycobacteriaceae</taxon>
        <taxon>Mycobacterium</taxon>
        <taxon>Mycobacterium ulcerans group</taxon>
    </lineage>
</organism>
<protein>
    <recommendedName>
        <fullName evidence="1">Riboflavin biosynthesis protein RibBA</fullName>
    </recommendedName>
    <domain>
        <recommendedName>
            <fullName evidence="1">3,4-dihydroxy-2-butanone 4-phosphate synthase</fullName>
            <shortName evidence="1">DHBP synthase</shortName>
            <ecNumber evidence="1">4.1.99.12</ecNumber>
        </recommendedName>
    </domain>
    <domain>
        <recommendedName>
            <fullName evidence="1">GTP cyclohydrolase-2</fullName>
            <ecNumber evidence="1">3.5.4.25</ecNumber>
        </recommendedName>
        <alternativeName>
            <fullName evidence="1">GTP cyclohydrolase II</fullName>
        </alternativeName>
    </domain>
</protein>
<comment type="function">
    <text evidence="1">Catalyzes the conversion of D-ribulose 5-phosphate to formate and 3,4-dihydroxy-2-butanone 4-phosphate.</text>
</comment>
<comment type="function">
    <text evidence="1">Catalyzes the conversion of GTP to 2,5-diamino-6-ribosylamino-4(3H)-pyrimidinone 5'-phosphate (DARP), formate and pyrophosphate.</text>
</comment>
<comment type="catalytic activity">
    <reaction evidence="1">
        <text>D-ribulose 5-phosphate = (2S)-2-hydroxy-3-oxobutyl phosphate + formate + H(+)</text>
        <dbReference type="Rhea" id="RHEA:18457"/>
        <dbReference type="ChEBI" id="CHEBI:15378"/>
        <dbReference type="ChEBI" id="CHEBI:15740"/>
        <dbReference type="ChEBI" id="CHEBI:58121"/>
        <dbReference type="ChEBI" id="CHEBI:58830"/>
        <dbReference type="EC" id="4.1.99.12"/>
    </reaction>
</comment>
<comment type="catalytic activity">
    <reaction evidence="1">
        <text>GTP + 4 H2O = 2,5-diamino-6-hydroxy-4-(5-phosphoribosylamino)-pyrimidine + formate + 2 phosphate + 3 H(+)</text>
        <dbReference type="Rhea" id="RHEA:23704"/>
        <dbReference type="ChEBI" id="CHEBI:15377"/>
        <dbReference type="ChEBI" id="CHEBI:15378"/>
        <dbReference type="ChEBI" id="CHEBI:15740"/>
        <dbReference type="ChEBI" id="CHEBI:37565"/>
        <dbReference type="ChEBI" id="CHEBI:43474"/>
        <dbReference type="ChEBI" id="CHEBI:58614"/>
        <dbReference type="EC" id="3.5.4.25"/>
    </reaction>
</comment>
<comment type="cofactor">
    <cofactor evidence="1">
        <name>Mg(2+)</name>
        <dbReference type="ChEBI" id="CHEBI:18420"/>
    </cofactor>
    <cofactor evidence="1">
        <name>Mn(2+)</name>
        <dbReference type="ChEBI" id="CHEBI:29035"/>
    </cofactor>
    <text evidence="1">Binds 2 divalent metal cations per subunit. Magnesium or manganese.</text>
</comment>
<comment type="cofactor">
    <cofactor evidence="1">
        <name>Zn(2+)</name>
        <dbReference type="ChEBI" id="CHEBI:29105"/>
    </cofactor>
    <text evidence="1">Binds 1 zinc ion per subunit.</text>
</comment>
<comment type="pathway">
    <text evidence="1">Cofactor biosynthesis; riboflavin biosynthesis; 2-hydroxy-3-oxobutyl phosphate from D-ribulose 5-phosphate: step 1/1.</text>
</comment>
<comment type="pathway">
    <text evidence="1">Cofactor biosynthesis; riboflavin biosynthesis; 5-amino-6-(D-ribitylamino)uracil from GTP: step 1/4.</text>
</comment>
<comment type="similarity">
    <text evidence="1">In the N-terminal section; belongs to the DHBP synthase family.</text>
</comment>
<comment type="similarity">
    <text evidence="1">In the C-terminal section; belongs to the GTP cyclohydrolase II family.</text>
</comment>
<name>RIBBA_MYCUA</name>
<dbReference type="EC" id="4.1.99.12" evidence="1"/>
<dbReference type="EC" id="3.5.4.25" evidence="1"/>
<dbReference type="EMBL" id="CP000325">
    <property type="protein sequence ID" value="ABL04285.1"/>
    <property type="molecule type" value="Genomic_DNA"/>
</dbReference>
<dbReference type="RefSeq" id="WP_011739905.1">
    <property type="nucleotide sequence ID" value="NC_008611.1"/>
</dbReference>
<dbReference type="SMR" id="A0PPL6"/>
<dbReference type="KEGG" id="mul:MUL_1809"/>
<dbReference type="eggNOG" id="COG0108">
    <property type="taxonomic scope" value="Bacteria"/>
</dbReference>
<dbReference type="eggNOG" id="COG0807">
    <property type="taxonomic scope" value="Bacteria"/>
</dbReference>
<dbReference type="HOGENOM" id="CLU_020273_1_2_11"/>
<dbReference type="UniPathway" id="UPA00275">
    <property type="reaction ID" value="UER00399"/>
</dbReference>
<dbReference type="UniPathway" id="UPA00275">
    <property type="reaction ID" value="UER00400"/>
</dbReference>
<dbReference type="Proteomes" id="UP000000765">
    <property type="component" value="Chromosome"/>
</dbReference>
<dbReference type="GO" id="GO:0005829">
    <property type="term" value="C:cytosol"/>
    <property type="evidence" value="ECO:0007669"/>
    <property type="project" value="TreeGrafter"/>
</dbReference>
<dbReference type="GO" id="GO:0008686">
    <property type="term" value="F:3,4-dihydroxy-2-butanone-4-phosphate synthase activity"/>
    <property type="evidence" value="ECO:0007669"/>
    <property type="project" value="UniProtKB-UniRule"/>
</dbReference>
<dbReference type="GO" id="GO:0005525">
    <property type="term" value="F:GTP binding"/>
    <property type="evidence" value="ECO:0007669"/>
    <property type="project" value="UniProtKB-KW"/>
</dbReference>
<dbReference type="GO" id="GO:0003935">
    <property type="term" value="F:GTP cyclohydrolase II activity"/>
    <property type="evidence" value="ECO:0007669"/>
    <property type="project" value="UniProtKB-UniRule"/>
</dbReference>
<dbReference type="GO" id="GO:0000287">
    <property type="term" value="F:magnesium ion binding"/>
    <property type="evidence" value="ECO:0007669"/>
    <property type="project" value="UniProtKB-UniRule"/>
</dbReference>
<dbReference type="GO" id="GO:0030145">
    <property type="term" value="F:manganese ion binding"/>
    <property type="evidence" value="ECO:0007669"/>
    <property type="project" value="UniProtKB-UniRule"/>
</dbReference>
<dbReference type="GO" id="GO:0008270">
    <property type="term" value="F:zinc ion binding"/>
    <property type="evidence" value="ECO:0007669"/>
    <property type="project" value="UniProtKB-UniRule"/>
</dbReference>
<dbReference type="GO" id="GO:0009231">
    <property type="term" value="P:riboflavin biosynthetic process"/>
    <property type="evidence" value="ECO:0007669"/>
    <property type="project" value="UniProtKB-UniRule"/>
</dbReference>
<dbReference type="CDD" id="cd00641">
    <property type="entry name" value="GTP_cyclohydro2"/>
    <property type="match status" value="1"/>
</dbReference>
<dbReference type="FunFam" id="3.40.50.10990:FF:000001">
    <property type="entry name" value="Riboflavin biosynthesis protein RibBA"/>
    <property type="match status" value="1"/>
</dbReference>
<dbReference type="FunFam" id="3.90.870.10:FF:000001">
    <property type="entry name" value="Riboflavin biosynthesis protein RibBA"/>
    <property type="match status" value="1"/>
</dbReference>
<dbReference type="Gene3D" id="3.90.870.10">
    <property type="entry name" value="DHBP synthase"/>
    <property type="match status" value="1"/>
</dbReference>
<dbReference type="Gene3D" id="3.40.50.10990">
    <property type="entry name" value="GTP cyclohydrolase II"/>
    <property type="match status" value="1"/>
</dbReference>
<dbReference type="HAMAP" id="MF_00179">
    <property type="entry name" value="RibA"/>
    <property type="match status" value="1"/>
</dbReference>
<dbReference type="HAMAP" id="MF_00180">
    <property type="entry name" value="RibB"/>
    <property type="match status" value="1"/>
</dbReference>
<dbReference type="HAMAP" id="MF_01283">
    <property type="entry name" value="RibBA"/>
    <property type="match status" value="1"/>
</dbReference>
<dbReference type="InterPro" id="IPR017945">
    <property type="entry name" value="DHBP_synth_RibB-like_a/b_dom"/>
</dbReference>
<dbReference type="InterPro" id="IPR000422">
    <property type="entry name" value="DHBP_synthase_RibB"/>
</dbReference>
<dbReference type="InterPro" id="IPR032677">
    <property type="entry name" value="GTP_cyclohydro_II"/>
</dbReference>
<dbReference type="InterPro" id="IPR000926">
    <property type="entry name" value="RibA"/>
</dbReference>
<dbReference type="InterPro" id="IPR036144">
    <property type="entry name" value="RibA-like_sf"/>
</dbReference>
<dbReference type="InterPro" id="IPR016299">
    <property type="entry name" value="Riboflavin_synth_RibBA"/>
</dbReference>
<dbReference type="NCBIfam" id="NF001591">
    <property type="entry name" value="PRK00393.1"/>
    <property type="match status" value="1"/>
</dbReference>
<dbReference type="NCBIfam" id="NF006803">
    <property type="entry name" value="PRK09311.1"/>
    <property type="match status" value="1"/>
</dbReference>
<dbReference type="NCBIfam" id="TIGR00505">
    <property type="entry name" value="ribA"/>
    <property type="match status" value="1"/>
</dbReference>
<dbReference type="NCBIfam" id="TIGR00506">
    <property type="entry name" value="ribB"/>
    <property type="match status" value="1"/>
</dbReference>
<dbReference type="PANTHER" id="PTHR21327:SF18">
    <property type="entry name" value="3,4-DIHYDROXY-2-BUTANONE 4-PHOSPHATE SYNTHASE"/>
    <property type="match status" value="1"/>
</dbReference>
<dbReference type="PANTHER" id="PTHR21327">
    <property type="entry name" value="GTP CYCLOHYDROLASE II-RELATED"/>
    <property type="match status" value="1"/>
</dbReference>
<dbReference type="Pfam" id="PF00926">
    <property type="entry name" value="DHBP_synthase"/>
    <property type="match status" value="1"/>
</dbReference>
<dbReference type="Pfam" id="PF00925">
    <property type="entry name" value="GTP_cyclohydro2"/>
    <property type="match status" value="1"/>
</dbReference>
<dbReference type="PIRSF" id="PIRSF001259">
    <property type="entry name" value="RibA"/>
    <property type="match status" value="1"/>
</dbReference>
<dbReference type="SUPFAM" id="SSF142695">
    <property type="entry name" value="RibA-like"/>
    <property type="match status" value="1"/>
</dbReference>
<dbReference type="SUPFAM" id="SSF55821">
    <property type="entry name" value="YrdC/RibB"/>
    <property type="match status" value="1"/>
</dbReference>
<sequence>MTRLDSVERAVADIGAGKAVIVIDDEDRENEGDLIFAAEKATPELVAFMVRYTSGYLCVPLDGAVCDRLGLLPMYAVNQDKHGTAYTVTVDAKNGVGTGISASDRATTMRLLADPASVAEDFTRPGHVVPLRAKDGGVLRRPGHTEAAVDLARMAGLQPAGAICEIVSRKDEGSMAQTDELRVFADEHGLALITIADLIEWRRKHEKHIERVAEARIPTRRGEFRAIGYTSIYENVEHVALVRGEIAGPNSDGDDVLVRVHSECLTGDVFGSRRCDCGSQLDAAMAMVAREGRGVVLYMRGHEGRGIGLLHKLQTYQLQDAGDDTVDANLKLGLPADARDYGIGAQILVDLGVRSMRLLTNNPAKRVGLDGYGLHIIERVPLPVRANAENIRYLMTKRDRMGHDLTGLDDFHESVHLPGEFGGAL</sequence>